<sequence>MSYFKTAMLLAGLTALFMGIGYLIGGASGALIALVVAAAMNVFTYWNSDRMVLSMYGAQEVDVRSAPDLVRMVAELAGRAGLPMPRVFIMDNPQPNAFATGRNPENAAVAVTTGLMQQLSREELAGVIAHELAHVKNHDTLLMTITATIAGAISMVAQFGMFFGGNRENNNGPGLIGSLALMILAPLGAMLVQMAISRTREYAADEMGARICGQPMWLASALGRIDAAAHQVPNVEAERAPATAHMFIINPLSGQGMDNLFATHPSTQNRIAALQRLTGEIGGGGASIGRPAGPSPRGAPRSPWSGQPRARGPWG</sequence>
<evidence type="ECO:0000255" key="1">
    <source>
        <dbReference type="HAMAP-Rule" id="MF_00188"/>
    </source>
</evidence>
<evidence type="ECO:0000256" key="2">
    <source>
        <dbReference type="SAM" id="MobiDB-lite"/>
    </source>
</evidence>
<reference key="1">
    <citation type="submission" date="2006-03" db="EMBL/GenBank/DDBJ databases">
        <title>Complete sequence of Rhodopseudomonas palustris BisB5.</title>
        <authorList>
            <consortium name="US DOE Joint Genome Institute"/>
            <person name="Copeland A."/>
            <person name="Lucas S."/>
            <person name="Lapidus A."/>
            <person name="Barry K."/>
            <person name="Detter J.C."/>
            <person name="Glavina del Rio T."/>
            <person name="Hammon N."/>
            <person name="Israni S."/>
            <person name="Dalin E."/>
            <person name="Tice H."/>
            <person name="Pitluck S."/>
            <person name="Chain P."/>
            <person name="Malfatti S."/>
            <person name="Shin M."/>
            <person name="Vergez L."/>
            <person name="Schmutz J."/>
            <person name="Larimer F."/>
            <person name="Land M."/>
            <person name="Hauser L."/>
            <person name="Pelletier D.A."/>
            <person name="Kyrpides N."/>
            <person name="Lykidis A."/>
            <person name="Oda Y."/>
            <person name="Harwood C.S."/>
            <person name="Richardson P."/>
        </authorList>
    </citation>
    <scope>NUCLEOTIDE SEQUENCE [LARGE SCALE GENOMIC DNA]</scope>
    <source>
        <strain>BisB5</strain>
    </source>
</reference>
<keyword id="KW-0997">Cell inner membrane</keyword>
<keyword id="KW-1003">Cell membrane</keyword>
<keyword id="KW-0378">Hydrolase</keyword>
<keyword id="KW-0472">Membrane</keyword>
<keyword id="KW-0479">Metal-binding</keyword>
<keyword id="KW-0482">Metalloprotease</keyword>
<keyword id="KW-0645">Protease</keyword>
<keyword id="KW-0812">Transmembrane</keyword>
<keyword id="KW-1133">Transmembrane helix</keyword>
<keyword id="KW-0862">Zinc</keyword>
<proteinExistence type="inferred from homology"/>
<protein>
    <recommendedName>
        <fullName evidence="1">Protease HtpX homolog</fullName>
        <ecNumber evidence="1">3.4.24.-</ecNumber>
    </recommendedName>
</protein>
<comment type="cofactor">
    <cofactor evidence="1">
        <name>Zn(2+)</name>
        <dbReference type="ChEBI" id="CHEBI:29105"/>
    </cofactor>
    <text evidence="1">Binds 1 zinc ion per subunit.</text>
</comment>
<comment type="subcellular location">
    <subcellularLocation>
        <location evidence="1">Cell inner membrane</location>
        <topology evidence="1">Multi-pass membrane protein</topology>
    </subcellularLocation>
</comment>
<comment type="similarity">
    <text evidence="1">Belongs to the peptidase M48B family.</text>
</comment>
<organism>
    <name type="scientific">Rhodopseudomonas palustris (strain BisB5)</name>
    <dbReference type="NCBI Taxonomy" id="316057"/>
    <lineage>
        <taxon>Bacteria</taxon>
        <taxon>Pseudomonadati</taxon>
        <taxon>Pseudomonadota</taxon>
        <taxon>Alphaproteobacteria</taxon>
        <taxon>Hyphomicrobiales</taxon>
        <taxon>Nitrobacteraceae</taxon>
        <taxon>Rhodopseudomonas</taxon>
    </lineage>
</organism>
<dbReference type="EC" id="3.4.24.-" evidence="1"/>
<dbReference type="EMBL" id="CP000283">
    <property type="protein sequence ID" value="ABE38012.1"/>
    <property type="molecule type" value="Genomic_DNA"/>
</dbReference>
<dbReference type="STRING" id="316057.RPD_0774"/>
<dbReference type="KEGG" id="rpd:RPD_0774"/>
<dbReference type="eggNOG" id="COG0501">
    <property type="taxonomic scope" value="Bacteria"/>
</dbReference>
<dbReference type="HOGENOM" id="CLU_042266_3_0_5"/>
<dbReference type="BioCyc" id="RPAL316057:RPD_RS03950-MONOMER"/>
<dbReference type="Proteomes" id="UP000001818">
    <property type="component" value="Chromosome"/>
</dbReference>
<dbReference type="GO" id="GO:0005886">
    <property type="term" value="C:plasma membrane"/>
    <property type="evidence" value="ECO:0007669"/>
    <property type="project" value="UniProtKB-SubCell"/>
</dbReference>
<dbReference type="GO" id="GO:0004222">
    <property type="term" value="F:metalloendopeptidase activity"/>
    <property type="evidence" value="ECO:0007669"/>
    <property type="project" value="UniProtKB-UniRule"/>
</dbReference>
<dbReference type="GO" id="GO:0008270">
    <property type="term" value="F:zinc ion binding"/>
    <property type="evidence" value="ECO:0007669"/>
    <property type="project" value="UniProtKB-UniRule"/>
</dbReference>
<dbReference type="GO" id="GO:0006508">
    <property type="term" value="P:proteolysis"/>
    <property type="evidence" value="ECO:0007669"/>
    <property type="project" value="UniProtKB-KW"/>
</dbReference>
<dbReference type="CDD" id="cd07336">
    <property type="entry name" value="M48B_HtpX_like"/>
    <property type="match status" value="1"/>
</dbReference>
<dbReference type="Gene3D" id="3.30.2010.10">
    <property type="entry name" value="Metalloproteases ('zincins'), catalytic domain"/>
    <property type="match status" value="1"/>
</dbReference>
<dbReference type="HAMAP" id="MF_00188">
    <property type="entry name" value="Pept_M48_protease_HtpX"/>
    <property type="match status" value="1"/>
</dbReference>
<dbReference type="InterPro" id="IPR050083">
    <property type="entry name" value="HtpX_protease"/>
</dbReference>
<dbReference type="InterPro" id="IPR022919">
    <property type="entry name" value="Pept_M48_protease_HtpX"/>
</dbReference>
<dbReference type="InterPro" id="IPR001915">
    <property type="entry name" value="Peptidase_M48"/>
</dbReference>
<dbReference type="NCBIfam" id="NF002363">
    <property type="entry name" value="PRK01345.1"/>
    <property type="match status" value="1"/>
</dbReference>
<dbReference type="NCBIfam" id="NF002826">
    <property type="entry name" value="PRK03001.1"/>
    <property type="match status" value="1"/>
</dbReference>
<dbReference type="PANTHER" id="PTHR43221">
    <property type="entry name" value="PROTEASE HTPX"/>
    <property type="match status" value="1"/>
</dbReference>
<dbReference type="PANTHER" id="PTHR43221:SF1">
    <property type="entry name" value="PROTEASE HTPX"/>
    <property type="match status" value="1"/>
</dbReference>
<dbReference type="Pfam" id="PF01435">
    <property type="entry name" value="Peptidase_M48"/>
    <property type="match status" value="1"/>
</dbReference>
<accession>Q13D27</accession>
<name>HTPX_RHOPS</name>
<gene>
    <name evidence="1" type="primary">htpX</name>
    <name type="ordered locus">RPD_0774</name>
</gene>
<feature type="chain" id="PRO_1000020925" description="Protease HtpX homolog">
    <location>
        <begin position="1"/>
        <end position="315"/>
    </location>
</feature>
<feature type="transmembrane region" description="Helical" evidence="1">
    <location>
        <begin position="16"/>
        <end position="36"/>
    </location>
</feature>
<feature type="transmembrane region" description="Helical" evidence="1">
    <location>
        <begin position="145"/>
        <end position="165"/>
    </location>
</feature>
<feature type="transmembrane region" description="Helical" evidence="1">
    <location>
        <begin position="172"/>
        <end position="192"/>
    </location>
</feature>
<feature type="region of interest" description="Disordered" evidence="2">
    <location>
        <begin position="282"/>
        <end position="315"/>
    </location>
</feature>
<feature type="compositionally biased region" description="Low complexity" evidence="2">
    <location>
        <begin position="288"/>
        <end position="303"/>
    </location>
</feature>
<feature type="active site" evidence="1">
    <location>
        <position position="131"/>
    </location>
</feature>
<feature type="binding site" evidence="1">
    <location>
        <position position="130"/>
    </location>
    <ligand>
        <name>Zn(2+)</name>
        <dbReference type="ChEBI" id="CHEBI:29105"/>
        <note>catalytic</note>
    </ligand>
</feature>
<feature type="binding site" evidence="1">
    <location>
        <position position="134"/>
    </location>
    <ligand>
        <name>Zn(2+)</name>
        <dbReference type="ChEBI" id="CHEBI:29105"/>
        <note>catalytic</note>
    </ligand>
</feature>
<feature type="binding site" evidence="1">
    <location>
        <position position="201"/>
    </location>
    <ligand>
        <name>Zn(2+)</name>
        <dbReference type="ChEBI" id="CHEBI:29105"/>
        <note>catalytic</note>
    </ligand>
</feature>